<accession>A6QPN6</accession>
<feature type="signal peptide" evidence="3">
    <location>
        <begin position="1"/>
        <end position="20"/>
    </location>
</feature>
<feature type="propeptide" id="PRO_0000406218" description="Removed in mature form" evidence="2">
    <location>
        <begin position="21"/>
        <end position="51"/>
    </location>
</feature>
<feature type="chain" id="PRO_0000406219" description="Gamma-interferon-inducible lysosomal thiol reductase">
    <location>
        <begin position="52"/>
        <end position="244"/>
    </location>
</feature>
<feature type="propeptide" id="PRO_0000406220" description="Removed in mature form" evidence="2">
    <location>
        <begin position="227"/>
        <end position="244"/>
    </location>
</feature>
<feature type="glycosylation site" description="N-linked (GlcNAc...) asparagine" evidence="3">
    <location>
        <position position="57"/>
    </location>
</feature>
<feature type="glycosylation site" description="N-linked (GlcNAc...) asparagine" evidence="3">
    <location>
        <position position="89"/>
    </location>
</feature>
<feature type="glycosylation site" description="N-linked (GlcNAc...) asparagine" evidence="3">
    <location>
        <position position="102"/>
    </location>
</feature>
<feature type="disulfide bond" description="Redox-active" evidence="2">
    <location>
        <begin position="66"/>
        <end position="69"/>
    </location>
</feature>
<keyword id="KW-1015">Disulfide bond</keyword>
<keyword id="KW-0325">Glycoprotein</keyword>
<keyword id="KW-0391">Immunity</keyword>
<keyword id="KW-0458">Lysosome</keyword>
<keyword id="KW-0560">Oxidoreductase</keyword>
<keyword id="KW-0676">Redox-active center</keyword>
<keyword id="KW-1185">Reference proteome</keyword>
<keyword id="KW-0964">Secreted</keyword>
<keyword id="KW-0732">Signal</keyword>
<evidence type="ECO:0000250" key="1"/>
<evidence type="ECO:0000250" key="2">
    <source>
        <dbReference type="UniProtKB" id="P13284"/>
    </source>
</evidence>
<evidence type="ECO:0000255" key="3"/>
<evidence type="ECO:0000305" key="4"/>
<name>GILT_BOVIN</name>
<comment type="function">
    <text evidence="1">Lysosomal thiol reductase that can reduce protein disulfide bonds. May facilitate the complete unfolding of proteins destined for lysosomal degradation. Plays an important role in antigen processing. Facilitates the generation of MHC class II-restricted epitodes from disulfide bond-containing antigen by the endocytic reduction of disulfide bonds. Also facilitates MHC class I-restricted recognition of exogenous antigens containing disulfide bonds by CD8+ T-cells or crosspresentation (By similarity).</text>
</comment>
<comment type="subunit">
    <text evidence="1">Dimer; disulfide-linked.</text>
</comment>
<comment type="subcellular location">
    <subcellularLocation>
        <location evidence="1">Secreted</location>
    </subcellularLocation>
    <subcellularLocation>
        <location evidence="1">Lysosome</location>
    </subcellularLocation>
</comment>
<comment type="PTM">
    <text evidence="1">N-glycosylated. Sugar chains contain mannose-6-phosphate (By similarity).</text>
</comment>
<comment type="PTM">
    <text evidence="1">Synthesized as a 35 kDa precursor which is then processed into the mature 30 kDa form via cleavage of N-terminal and C-terminal propeptides. Processing of the precursor is mediated by multiple lysosomal proteases (By similarity).</text>
</comment>
<comment type="miscellaneous">
    <text evidence="1">Both precursor form and mature form have thiol reductase activity.</text>
</comment>
<comment type="similarity">
    <text evidence="4">Belongs to the GILT family.</text>
</comment>
<sequence>MASSPLLFVLLLLLPLEVPAATRWSLLEALPEGAAPCQVGELCLQASPQKPDVPLVNVSLYYEALCPGCREFLIRELFPTWLMVLEILNVTLVPYGNAQERNVSGKWEFTCQHGERECLLNKVEACLLDQLEQKIAFLTIVCLEEMDDMEQNLKPCLQIYAPKVSADSIMECATGNRGMQLLHINAQLTDALRPPHKYVPWVVVNGEHMKDAEHLLHLVCRLYQGQKPDVCQLTAELSKEVHFK</sequence>
<protein>
    <recommendedName>
        <fullName>Gamma-interferon-inducible lysosomal thiol reductase</fullName>
        <ecNumber evidence="2">1.8.-.-</ecNumber>
    </recommendedName>
    <alternativeName>
        <fullName>IFI30 protein</fullName>
    </alternativeName>
</protein>
<gene>
    <name type="primary">IFI30</name>
</gene>
<dbReference type="EC" id="1.8.-.-" evidence="2"/>
<dbReference type="EMBL" id="BC149406">
    <property type="protein sequence ID" value="AAI49407.1"/>
    <property type="molecule type" value="mRNA"/>
</dbReference>
<dbReference type="RefSeq" id="NP_001094721.1">
    <property type="nucleotide sequence ID" value="NM_001101251.2"/>
</dbReference>
<dbReference type="SMR" id="A6QPN6"/>
<dbReference type="FunCoup" id="A6QPN6">
    <property type="interactions" value="636"/>
</dbReference>
<dbReference type="STRING" id="9913.ENSBTAP00000066370"/>
<dbReference type="GlyCosmos" id="A6QPN6">
    <property type="glycosylation" value="3 sites, No reported glycans"/>
</dbReference>
<dbReference type="GlyGen" id="A6QPN6">
    <property type="glycosylation" value="3 sites"/>
</dbReference>
<dbReference type="PaxDb" id="9913-ENSBTAP00000045061"/>
<dbReference type="GeneID" id="615930"/>
<dbReference type="KEGG" id="bta:615930"/>
<dbReference type="CTD" id="10437"/>
<dbReference type="VEuPathDB" id="HostDB:ENSBTAG00000018349"/>
<dbReference type="eggNOG" id="KOG3160">
    <property type="taxonomic scope" value="Eukaryota"/>
</dbReference>
<dbReference type="InParanoid" id="A6QPN6"/>
<dbReference type="OrthoDB" id="958254at2759"/>
<dbReference type="Reactome" id="R-BTA-2132295">
    <property type="pathway name" value="MHC class II antigen presentation"/>
</dbReference>
<dbReference type="Proteomes" id="UP000009136">
    <property type="component" value="Chromosome 7"/>
</dbReference>
<dbReference type="Bgee" id="ENSBTAG00000018349">
    <property type="expression patterns" value="Expressed in uterine cervix and 105 other cell types or tissues"/>
</dbReference>
<dbReference type="GO" id="GO:0005576">
    <property type="term" value="C:extracellular region"/>
    <property type="evidence" value="ECO:0007669"/>
    <property type="project" value="UniProtKB-SubCell"/>
</dbReference>
<dbReference type="GO" id="GO:0005764">
    <property type="term" value="C:lysosome"/>
    <property type="evidence" value="ECO:0000250"/>
    <property type="project" value="UniProtKB"/>
</dbReference>
<dbReference type="GO" id="GO:0016667">
    <property type="term" value="F:oxidoreductase activity, acting on a sulfur group of donors"/>
    <property type="evidence" value="ECO:0000250"/>
    <property type="project" value="UniProtKB"/>
</dbReference>
<dbReference type="GO" id="GO:0016671">
    <property type="term" value="F:oxidoreductase activity, acting on a sulfur group of donors, disulfide as acceptor"/>
    <property type="evidence" value="ECO:0007669"/>
    <property type="project" value="InterPro"/>
</dbReference>
<dbReference type="GO" id="GO:0042590">
    <property type="term" value="P:antigen processing and presentation of exogenous peptide antigen via MHC class I"/>
    <property type="evidence" value="ECO:0000250"/>
    <property type="project" value="UniProtKB"/>
</dbReference>
<dbReference type="InterPro" id="IPR004911">
    <property type="entry name" value="Interferon-induced_GILT"/>
</dbReference>
<dbReference type="PANTHER" id="PTHR13234">
    <property type="entry name" value="GAMMA-INTERFERON INDUCIBLE LYSOSOMAL THIOL REDUCTASE GILT"/>
    <property type="match status" value="1"/>
</dbReference>
<dbReference type="PANTHER" id="PTHR13234:SF8">
    <property type="entry name" value="GAMMA-INTERFERON-INDUCIBLE LYSOSOMAL THIOL REDUCTASE"/>
    <property type="match status" value="1"/>
</dbReference>
<dbReference type="Pfam" id="PF03227">
    <property type="entry name" value="GILT"/>
    <property type="match status" value="1"/>
</dbReference>
<proteinExistence type="evidence at transcript level"/>
<reference key="1">
    <citation type="submission" date="2007-07" db="EMBL/GenBank/DDBJ databases">
        <authorList>
            <consortium name="NIH - Mammalian Gene Collection (MGC) project"/>
        </authorList>
    </citation>
    <scope>NUCLEOTIDE SEQUENCE [LARGE SCALE MRNA]</scope>
    <source>
        <strain>Hereford</strain>
        <tissue>Fetal spinal cord</tissue>
    </source>
</reference>
<organism>
    <name type="scientific">Bos taurus</name>
    <name type="common">Bovine</name>
    <dbReference type="NCBI Taxonomy" id="9913"/>
    <lineage>
        <taxon>Eukaryota</taxon>
        <taxon>Metazoa</taxon>
        <taxon>Chordata</taxon>
        <taxon>Craniata</taxon>
        <taxon>Vertebrata</taxon>
        <taxon>Euteleostomi</taxon>
        <taxon>Mammalia</taxon>
        <taxon>Eutheria</taxon>
        <taxon>Laurasiatheria</taxon>
        <taxon>Artiodactyla</taxon>
        <taxon>Ruminantia</taxon>
        <taxon>Pecora</taxon>
        <taxon>Bovidae</taxon>
        <taxon>Bovinae</taxon>
        <taxon>Bos</taxon>
    </lineage>
</organism>